<protein>
    <recommendedName>
        <fullName evidence="1">Membrane-bound lytic murein transglycosylase F</fullName>
        <ecNumber evidence="1">4.2.2.n1</ecNumber>
    </recommendedName>
    <alternativeName>
        <fullName evidence="1">Murein lyase F</fullName>
    </alternativeName>
</protein>
<dbReference type="EC" id="4.2.2.n1" evidence="1"/>
<dbReference type="EMBL" id="CP000094">
    <property type="protein sequence ID" value="ABA72741.1"/>
    <property type="molecule type" value="Genomic_DNA"/>
</dbReference>
<dbReference type="RefSeq" id="WP_011332593.1">
    <property type="nucleotide sequence ID" value="NC_007492.2"/>
</dbReference>
<dbReference type="SMR" id="Q3KHL5"/>
<dbReference type="CAZy" id="GH23">
    <property type="family name" value="Glycoside Hydrolase Family 23"/>
</dbReference>
<dbReference type="KEGG" id="pfo:Pfl01_0998"/>
<dbReference type="eggNOG" id="COG4623">
    <property type="taxonomic scope" value="Bacteria"/>
</dbReference>
<dbReference type="HOGENOM" id="CLU_027494_0_1_6"/>
<dbReference type="Proteomes" id="UP000002704">
    <property type="component" value="Chromosome"/>
</dbReference>
<dbReference type="GO" id="GO:0009279">
    <property type="term" value="C:cell outer membrane"/>
    <property type="evidence" value="ECO:0007669"/>
    <property type="project" value="UniProtKB-SubCell"/>
</dbReference>
<dbReference type="GO" id="GO:0008933">
    <property type="term" value="F:peptidoglycan lytic transglycosylase activity"/>
    <property type="evidence" value="ECO:0007669"/>
    <property type="project" value="UniProtKB-UniRule"/>
</dbReference>
<dbReference type="GO" id="GO:0016998">
    <property type="term" value="P:cell wall macromolecule catabolic process"/>
    <property type="evidence" value="ECO:0007669"/>
    <property type="project" value="UniProtKB-UniRule"/>
</dbReference>
<dbReference type="GO" id="GO:0071555">
    <property type="term" value="P:cell wall organization"/>
    <property type="evidence" value="ECO:0007669"/>
    <property type="project" value="UniProtKB-KW"/>
</dbReference>
<dbReference type="GO" id="GO:0009253">
    <property type="term" value="P:peptidoglycan catabolic process"/>
    <property type="evidence" value="ECO:0007669"/>
    <property type="project" value="TreeGrafter"/>
</dbReference>
<dbReference type="CDD" id="cd13403">
    <property type="entry name" value="MLTF-like"/>
    <property type="match status" value="1"/>
</dbReference>
<dbReference type="CDD" id="cd01009">
    <property type="entry name" value="PBP2_YfhD_N"/>
    <property type="match status" value="1"/>
</dbReference>
<dbReference type="Gene3D" id="1.10.530.10">
    <property type="match status" value="1"/>
</dbReference>
<dbReference type="Gene3D" id="3.40.190.10">
    <property type="entry name" value="Periplasmic binding protein-like II"/>
    <property type="match status" value="2"/>
</dbReference>
<dbReference type="HAMAP" id="MF_02016">
    <property type="entry name" value="MltF"/>
    <property type="match status" value="1"/>
</dbReference>
<dbReference type="InterPro" id="IPR023346">
    <property type="entry name" value="Lysozyme-like_dom_sf"/>
</dbReference>
<dbReference type="InterPro" id="IPR023703">
    <property type="entry name" value="MltF"/>
</dbReference>
<dbReference type="InterPro" id="IPR001638">
    <property type="entry name" value="Solute-binding_3/MltF_N"/>
</dbReference>
<dbReference type="InterPro" id="IPR000189">
    <property type="entry name" value="Transglyc_AS"/>
</dbReference>
<dbReference type="InterPro" id="IPR008258">
    <property type="entry name" value="Transglycosylase_SLT_dom_1"/>
</dbReference>
<dbReference type="NCBIfam" id="NF008112">
    <property type="entry name" value="PRK10859.1"/>
    <property type="match status" value="1"/>
</dbReference>
<dbReference type="PANTHER" id="PTHR35936">
    <property type="entry name" value="MEMBRANE-BOUND LYTIC MUREIN TRANSGLYCOSYLASE F"/>
    <property type="match status" value="1"/>
</dbReference>
<dbReference type="PANTHER" id="PTHR35936:SF32">
    <property type="entry name" value="MEMBRANE-BOUND LYTIC MUREIN TRANSGLYCOSYLASE F"/>
    <property type="match status" value="1"/>
</dbReference>
<dbReference type="Pfam" id="PF00497">
    <property type="entry name" value="SBP_bac_3"/>
    <property type="match status" value="1"/>
</dbReference>
<dbReference type="Pfam" id="PF01464">
    <property type="entry name" value="SLT"/>
    <property type="match status" value="1"/>
</dbReference>
<dbReference type="SMART" id="SM00062">
    <property type="entry name" value="PBPb"/>
    <property type="match status" value="1"/>
</dbReference>
<dbReference type="SUPFAM" id="SSF53955">
    <property type="entry name" value="Lysozyme-like"/>
    <property type="match status" value="1"/>
</dbReference>
<dbReference type="SUPFAM" id="SSF53850">
    <property type="entry name" value="Periplasmic binding protein-like II"/>
    <property type="match status" value="1"/>
</dbReference>
<dbReference type="PROSITE" id="PS00922">
    <property type="entry name" value="TRANSGLYCOSYLASE"/>
    <property type="match status" value="1"/>
</dbReference>
<evidence type="ECO:0000255" key="1">
    <source>
        <dbReference type="HAMAP-Rule" id="MF_02016"/>
    </source>
</evidence>
<proteinExistence type="inferred from homology"/>
<keyword id="KW-0998">Cell outer membrane</keyword>
<keyword id="KW-0961">Cell wall biogenesis/degradation</keyword>
<keyword id="KW-0456">Lyase</keyword>
<keyword id="KW-0472">Membrane</keyword>
<keyword id="KW-0732">Signal</keyword>
<accession>Q3KHL5</accession>
<gene>
    <name evidence="1" type="primary">mltF</name>
    <name type="ordered locus">Pfl01_0998</name>
</gene>
<name>MLTF_PSEPF</name>
<organism>
    <name type="scientific">Pseudomonas fluorescens (strain Pf0-1)</name>
    <dbReference type="NCBI Taxonomy" id="205922"/>
    <lineage>
        <taxon>Bacteria</taxon>
        <taxon>Pseudomonadati</taxon>
        <taxon>Pseudomonadota</taxon>
        <taxon>Gammaproteobacteria</taxon>
        <taxon>Pseudomonadales</taxon>
        <taxon>Pseudomonadaceae</taxon>
        <taxon>Pseudomonas</taxon>
    </lineage>
</organism>
<reference key="1">
    <citation type="journal article" date="2009" name="Genome Biol.">
        <title>Genomic and genetic analyses of diversity and plant interactions of Pseudomonas fluorescens.</title>
        <authorList>
            <person name="Silby M.W."/>
            <person name="Cerdeno-Tarraga A.M."/>
            <person name="Vernikos G.S."/>
            <person name="Giddens S.R."/>
            <person name="Jackson R.W."/>
            <person name="Preston G.M."/>
            <person name="Zhang X.-X."/>
            <person name="Moon C.D."/>
            <person name="Gehrig S.M."/>
            <person name="Godfrey S.A.C."/>
            <person name="Knight C.G."/>
            <person name="Malone J.G."/>
            <person name="Robinson Z."/>
            <person name="Spiers A.J."/>
            <person name="Harris S."/>
            <person name="Challis G.L."/>
            <person name="Yaxley A.M."/>
            <person name="Harris D."/>
            <person name="Seeger K."/>
            <person name="Murphy L."/>
            <person name="Rutter S."/>
            <person name="Squares R."/>
            <person name="Quail M.A."/>
            <person name="Saunders E."/>
            <person name="Mavromatis K."/>
            <person name="Brettin T.S."/>
            <person name="Bentley S.D."/>
            <person name="Hothersall J."/>
            <person name="Stephens E."/>
            <person name="Thomas C.M."/>
            <person name="Parkhill J."/>
            <person name="Levy S.B."/>
            <person name="Rainey P.B."/>
            <person name="Thomson N.R."/>
        </authorList>
    </citation>
    <scope>NUCLEOTIDE SEQUENCE [LARGE SCALE GENOMIC DNA]</scope>
    <source>
        <strain>Pf0-1</strain>
    </source>
</reference>
<feature type="signal peptide" evidence="1">
    <location>
        <begin position="1"/>
        <end position="29"/>
    </location>
</feature>
<feature type="chain" id="PRO_0000353962" description="Membrane-bound lytic murein transglycosylase F">
    <location>
        <begin position="30"/>
        <end position="486"/>
    </location>
</feature>
<feature type="region of interest" description="Non-LT domain" evidence="1">
    <location>
        <begin position="30"/>
        <end position="267"/>
    </location>
</feature>
<feature type="region of interest" description="LT domain" evidence="1">
    <location>
        <begin position="268"/>
        <end position="486"/>
    </location>
</feature>
<feature type="active site" evidence="1">
    <location>
        <position position="314"/>
    </location>
</feature>
<sequence length="486" mass="54724">MFSPTALRPRYAKWLIATGLFLMLSGCVDKPNTLERVKEDGVLRVVTRNSPATYFQDRSGETGFEYELVKRFADDLGVELKIETADNLDDLFNQVGKPNGPVLAAAGLVSSEQRKKQVRFSRSYLEVTPQIIYRNGQSRPTDAGDLVGKKIMVLKGSTHAEQLAELKQKYPGIQYEESDAVEVVDLLRMVDEGQIDLTLVDSNEVAMNQVYFTNIRVAFDLGDARSQSWAVAAGEDNSLLNEINSYLDKVQKNGTLQRLKDRYYGHVDVLGYMGATTFAQHLQQRLPKYEQHFKAYAKKEKVDWRLLAAIGYQESLWQPAVTSKTGVRGLMMLTQNTAQAMGVSNRLDPKQSIMGGAKYLAYMKDQLDESIQEPDRTWFALAAYNVGSGHLDDARKLAAKEGLNPDKWLDVKKILPRLSQKQWYSKTRYGYARGGEPVHFVANIRRYYDILTWVTQPQLEGDQVAEGNLHVPGIDKSKPAQEPAPL</sequence>
<comment type="function">
    <text evidence="1">Murein-degrading enzyme that degrades murein glycan strands and insoluble, high-molecular weight murein sacculi, with the concomitant formation of a 1,6-anhydromuramoyl product. Lytic transglycosylases (LTs) play an integral role in the metabolism of the peptidoglycan (PG) sacculus. Their lytic action creates space within the PG sacculus to allow for its expansion as well as for the insertion of various structures such as secretion systems and flagella.</text>
</comment>
<comment type="catalytic activity">
    <reaction evidence="1">
        <text>Exolytic cleavage of the (1-&gt;4)-beta-glycosidic linkage between N-acetylmuramic acid (MurNAc) and N-acetylglucosamine (GlcNAc) residues in peptidoglycan, from either the reducing or the non-reducing ends of the peptidoglycan chains, with concomitant formation of a 1,6-anhydrobond in the MurNAc residue.</text>
        <dbReference type="EC" id="4.2.2.n1"/>
    </reaction>
</comment>
<comment type="subcellular location">
    <subcellularLocation>
        <location>Cell outer membrane</location>
        <topology>Peripheral membrane protein</topology>
    </subcellularLocation>
    <text evidence="1">Attached to the inner leaflet of the outer membrane.</text>
</comment>
<comment type="domain">
    <text evidence="1">The N-terminal domain does not have lytic activity and probably modulates enzymatic activity. The C-terminal domain is the catalytic active domain.</text>
</comment>
<comment type="similarity">
    <text evidence="1">In the N-terminal section; belongs to the bacterial solute-binding protein 3 family.</text>
</comment>
<comment type="similarity">
    <text evidence="1">In the C-terminal section; belongs to the transglycosylase Slt family.</text>
</comment>